<protein>
    <recommendedName>
        <fullName evidence="1">Membrane protein insertase YidC</fullName>
    </recommendedName>
    <alternativeName>
        <fullName evidence="1">Foldase YidC</fullName>
    </alternativeName>
    <alternativeName>
        <fullName evidence="1">Membrane integrase YidC</fullName>
    </alternativeName>
    <alternativeName>
        <fullName evidence="1">Membrane protein YidC</fullName>
    </alternativeName>
</protein>
<feature type="chain" id="PRO_1000070103" description="Membrane protein insertase YidC">
    <location>
        <begin position="1"/>
        <end position="541"/>
    </location>
</feature>
<feature type="transmembrane region" description="Helical" evidence="1">
    <location>
        <begin position="6"/>
        <end position="26"/>
    </location>
</feature>
<feature type="transmembrane region" description="Helical" evidence="1">
    <location>
        <begin position="337"/>
        <end position="357"/>
    </location>
</feature>
<feature type="transmembrane region" description="Helical" evidence="1">
    <location>
        <begin position="416"/>
        <end position="436"/>
    </location>
</feature>
<feature type="transmembrane region" description="Helical" evidence="1">
    <location>
        <begin position="454"/>
        <end position="474"/>
    </location>
</feature>
<feature type="transmembrane region" description="Helical" evidence="1">
    <location>
        <begin position="495"/>
        <end position="515"/>
    </location>
</feature>
<feature type="region of interest" description="Disordered" evidence="2">
    <location>
        <begin position="34"/>
        <end position="56"/>
    </location>
</feature>
<dbReference type="EMBL" id="CP000057">
    <property type="protein sequence ID" value="AAX88037.1"/>
    <property type="molecule type" value="Genomic_DNA"/>
</dbReference>
<dbReference type="RefSeq" id="WP_005688355.1">
    <property type="nucleotide sequence ID" value="NC_007146.2"/>
</dbReference>
<dbReference type="SMR" id="Q4QLR0"/>
<dbReference type="KEGG" id="hit:NTHI1175"/>
<dbReference type="HOGENOM" id="CLU_016535_3_0_6"/>
<dbReference type="Proteomes" id="UP000002525">
    <property type="component" value="Chromosome"/>
</dbReference>
<dbReference type="GO" id="GO:0005886">
    <property type="term" value="C:plasma membrane"/>
    <property type="evidence" value="ECO:0007669"/>
    <property type="project" value="UniProtKB-SubCell"/>
</dbReference>
<dbReference type="GO" id="GO:0032977">
    <property type="term" value="F:membrane insertase activity"/>
    <property type="evidence" value="ECO:0007669"/>
    <property type="project" value="InterPro"/>
</dbReference>
<dbReference type="GO" id="GO:0051205">
    <property type="term" value="P:protein insertion into membrane"/>
    <property type="evidence" value="ECO:0007669"/>
    <property type="project" value="TreeGrafter"/>
</dbReference>
<dbReference type="GO" id="GO:0015031">
    <property type="term" value="P:protein transport"/>
    <property type="evidence" value="ECO:0007669"/>
    <property type="project" value="UniProtKB-KW"/>
</dbReference>
<dbReference type="CDD" id="cd20070">
    <property type="entry name" value="5TM_YidC_Alb3"/>
    <property type="match status" value="1"/>
</dbReference>
<dbReference type="CDD" id="cd19961">
    <property type="entry name" value="EcYidC-like_peri"/>
    <property type="match status" value="1"/>
</dbReference>
<dbReference type="FunFam" id="2.70.98.90:FF:000001">
    <property type="entry name" value="Membrane protein insertase YidC"/>
    <property type="match status" value="1"/>
</dbReference>
<dbReference type="Gene3D" id="2.70.98.90">
    <property type="match status" value="1"/>
</dbReference>
<dbReference type="HAMAP" id="MF_01810">
    <property type="entry name" value="YidC_type1"/>
    <property type="match status" value="1"/>
</dbReference>
<dbReference type="InterPro" id="IPR019998">
    <property type="entry name" value="Membr_insert_YidC"/>
</dbReference>
<dbReference type="InterPro" id="IPR028053">
    <property type="entry name" value="Membr_insert_YidC_N"/>
</dbReference>
<dbReference type="InterPro" id="IPR001708">
    <property type="entry name" value="YidC/ALB3/OXA1/COX18"/>
</dbReference>
<dbReference type="InterPro" id="IPR028055">
    <property type="entry name" value="YidC/Oxa/ALB_C"/>
</dbReference>
<dbReference type="InterPro" id="IPR047196">
    <property type="entry name" value="YidC_ALB_C"/>
</dbReference>
<dbReference type="InterPro" id="IPR038221">
    <property type="entry name" value="YidC_periplasmic_sf"/>
</dbReference>
<dbReference type="NCBIfam" id="NF002351">
    <property type="entry name" value="PRK01318.1-1"/>
    <property type="match status" value="1"/>
</dbReference>
<dbReference type="NCBIfam" id="NF002352">
    <property type="entry name" value="PRK01318.1-3"/>
    <property type="match status" value="1"/>
</dbReference>
<dbReference type="NCBIfam" id="TIGR03593">
    <property type="entry name" value="yidC_nterm"/>
    <property type="match status" value="1"/>
</dbReference>
<dbReference type="NCBIfam" id="TIGR03592">
    <property type="entry name" value="yidC_oxa1_cterm"/>
    <property type="match status" value="1"/>
</dbReference>
<dbReference type="PANTHER" id="PTHR12428:SF65">
    <property type="entry name" value="CYTOCHROME C OXIDASE ASSEMBLY PROTEIN COX18, MITOCHONDRIAL"/>
    <property type="match status" value="1"/>
</dbReference>
<dbReference type="PANTHER" id="PTHR12428">
    <property type="entry name" value="OXA1"/>
    <property type="match status" value="1"/>
</dbReference>
<dbReference type="Pfam" id="PF02096">
    <property type="entry name" value="60KD_IMP"/>
    <property type="match status" value="1"/>
</dbReference>
<dbReference type="Pfam" id="PF14849">
    <property type="entry name" value="YidC_periplas"/>
    <property type="match status" value="1"/>
</dbReference>
<dbReference type="PRINTS" id="PR00701">
    <property type="entry name" value="60KDINNERMP"/>
</dbReference>
<dbReference type="PRINTS" id="PR01900">
    <property type="entry name" value="YIDCPROTEIN"/>
</dbReference>
<organism>
    <name type="scientific">Haemophilus influenzae (strain 86-028NP)</name>
    <dbReference type="NCBI Taxonomy" id="281310"/>
    <lineage>
        <taxon>Bacteria</taxon>
        <taxon>Pseudomonadati</taxon>
        <taxon>Pseudomonadota</taxon>
        <taxon>Gammaproteobacteria</taxon>
        <taxon>Pasteurellales</taxon>
        <taxon>Pasteurellaceae</taxon>
        <taxon>Haemophilus</taxon>
    </lineage>
</organism>
<keyword id="KW-0997">Cell inner membrane</keyword>
<keyword id="KW-1003">Cell membrane</keyword>
<keyword id="KW-0143">Chaperone</keyword>
<keyword id="KW-0472">Membrane</keyword>
<keyword id="KW-0653">Protein transport</keyword>
<keyword id="KW-0812">Transmembrane</keyword>
<keyword id="KW-1133">Transmembrane helix</keyword>
<keyword id="KW-0813">Transport</keyword>
<sequence>MDSRRSLLVLALIFISFLVYQQWQLDKNPPVQTEQTTSITATSDVPASSPSNSQAIADSQTRGRIITLENDVFRLKIDTLGGDVISSELLKYDAELDSKTPFELLKDTKEHIYIAQSGLIGKNGIDTRSGRAQYQIEGDNFKLAEGQESLSVPLLFEKDGVTYQKIFVLKRGSYDLGVDYKIDNQSGQAIEVEPYGQLKHSIIESSGNVAMPTYTGGAYSSSETNYKKYSFADMQDNNLSIDTKAGWVAVLQHYFVSAWIPNQDVNNQLYTITDSKNNVASIGYRGPVVTIPAGSQETITSSLWTGPKLQNQMATVANNLDLTVDYGWAWFIAKPLFWLLTFIQGIVSNWGLAIICVTIVVKAILYPLTKAQYTSMAKMRILQPKMQEMRERFGDDRQRMSQEMMKLYKEEKVNPLGGCLPILLQMPIFIALYWTFLEAVELRHAPFFGWIQDLSAQDPYYILPILMGISMFLLQKMSPTPVTDPTQQKVMNFMPLVFMFFFLWFPSGLVLYWLVSNLITIAQQQLIYRGLEKKGLHSRKK</sequence>
<accession>Q4QLR0</accession>
<gene>
    <name evidence="1" type="primary">yidC</name>
    <name type="ordered locus">NTHI1175</name>
</gene>
<comment type="function">
    <text evidence="1">Required for the insertion and/or proper folding and/or complex formation of integral membrane proteins into the membrane. Involved in integration of membrane proteins that insert both dependently and independently of the Sec translocase complex, as well as at least some lipoproteins. Aids folding of multispanning membrane proteins.</text>
</comment>
<comment type="subunit">
    <text evidence="1">Interacts with the Sec translocase complex via SecD. Specifically interacts with transmembrane segments of nascent integral membrane proteins during membrane integration.</text>
</comment>
<comment type="subcellular location">
    <subcellularLocation>
        <location evidence="1">Cell inner membrane</location>
        <topology evidence="1">Multi-pass membrane protein</topology>
    </subcellularLocation>
</comment>
<comment type="similarity">
    <text evidence="1">Belongs to the OXA1/ALB3/YidC family. Type 1 subfamily.</text>
</comment>
<name>YIDC_HAEI8</name>
<evidence type="ECO:0000255" key="1">
    <source>
        <dbReference type="HAMAP-Rule" id="MF_01810"/>
    </source>
</evidence>
<evidence type="ECO:0000256" key="2">
    <source>
        <dbReference type="SAM" id="MobiDB-lite"/>
    </source>
</evidence>
<proteinExistence type="inferred from homology"/>
<reference key="1">
    <citation type="journal article" date="2005" name="J. Bacteriol.">
        <title>Genomic sequence of an otitis media isolate of nontypeable Haemophilus influenzae: comparative study with H. influenzae serotype d, strain KW20.</title>
        <authorList>
            <person name="Harrison A."/>
            <person name="Dyer D.W."/>
            <person name="Gillaspy A."/>
            <person name="Ray W.C."/>
            <person name="Mungur R."/>
            <person name="Carson M.B."/>
            <person name="Zhong H."/>
            <person name="Gipson J."/>
            <person name="Gipson M."/>
            <person name="Johnson L.S."/>
            <person name="Lewis L."/>
            <person name="Bakaletz L.O."/>
            <person name="Munson R.S. Jr."/>
        </authorList>
    </citation>
    <scope>NUCLEOTIDE SEQUENCE [LARGE SCALE GENOMIC DNA]</scope>
    <source>
        <strain>86-028NP</strain>
    </source>
</reference>